<proteinExistence type="evidence at protein level"/>
<accession>F4K5J1</accession>
<accession>E9N630</accession>
<accession>F4K5J2</accession>
<accession>K9KY88</accession>
<accession>Q0WQJ2</accession>
<name>MYO17_ARATH</name>
<reference key="1">
    <citation type="journal article" date="2011" name="Plant Physiol.">
        <title>Expression, splicing, and evolution of the myosin gene family in plants.</title>
        <authorList>
            <person name="Peremyslov V.V."/>
            <person name="Mockler T.C."/>
            <person name="Filichkin S.A."/>
            <person name="Fox S.E."/>
            <person name="Jaiswal P."/>
            <person name="Makarova K.S."/>
            <person name="Koonin E.V."/>
            <person name="Dolja V.V."/>
        </authorList>
    </citation>
    <scope>NUCLEOTIDE SEQUENCE [MRNA]</scope>
    <scope>GENE FAMILY</scope>
    <scope>NOMENCLATURE</scope>
</reference>
<reference key="2">
    <citation type="submission" date="2011-07" db="EMBL/GenBank/DDBJ databases">
        <title>Transport of secretory vesicle by myosin XIK is necessary for maintenance of optimal tip growth in root hairs of Arabidopsis thaliana.</title>
        <authorList>
            <person name="Park E."/>
            <person name="Nebenfuehr A."/>
        </authorList>
    </citation>
    <scope>NUCLEOTIDE SEQUENCE [MRNA]</scope>
    <source>
        <strain>cv. Columbia</strain>
    </source>
</reference>
<reference key="3">
    <citation type="journal article" date="2000" name="Nature">
        <title>Sequence and analysis of chromosome 5 of the plant Arabidopsis thaliana.</title>
        <authorList>
            <person name="Tabata S."/>
            <person name="Kaneko T."/>
            <person name="Nakamura Y."/>
            <person name="Kotani H."/>
            <person name="Kato T."/>
            <person name="Asamizu E."/>
            <person name="Miyajima N."/>
            <person name="Sasamoto S."/>
            <person name="Kimura T."/>
            <person name="Hosouchi T."/>
            <person name="Kawashima K."/>
            <person name="Kohara M."/>
            <person name="Matsumoto M."/>
            <person name="Matsuno A."/>
            <person name="Muraki A."/>
            <person name="Nakayama S."/>
            <person name="Nakazaki N."/>
            <person name="Naruo K."/>
            <person name="Okumura S."/>
            <person name="Shinpo S."/>
            <person name="Takeuchi C."/>
            <person name="Wada T."/>
            <person name="Watanabe A."/>
            <person name="Yamada M."/>
            <person name="Yasuda M."/>
            <person name="Sato S."/>
            <person name="de la Bastide M."/>
            <person name="Huang E."/>
            <person name="Spiegel L."/>
            <person name="Gnoj L."/>
            <person name="O'Shaughnessy A."/>
            <person name="Preston R."/>
            <person name="Habermann K."/>
            <person name="Murray J."/>
            <person name="Johnson D."/>
            <person name="Rohlfing T."/>
            <person name="Nelson J."/>
            <person name="Stoneking T."/>
            <person name="Pepin K."/>
            <person name="Spieth J."/>
            <person name="Sekhon M."/>
            <person name="Armstrong J."/>
            <person name="Becker M."/>
            <person name="Belter E."/>
            <person name="Cordum H."/>
            <person name="Cordes M."/>
            <person name="Courtney L."/>
            <person name="Courtney W."/>
            <person name="Dante M."/>
            <person name="Du H."/>
            <person name="Edwards J."/>
            <person name="Fryman J."/>
            <person name="Haakensen B."/>
            <person name="Lamar E."/>
            <person name="Latreille P."/>
            <person name="Leonard S."/>
            <person name="Meyer R."/>
            <person name="Mulvaney E."/>
            <person name="Ozersky P."/>
            <person name="Riley A."/>
            <person name="Strowmatt C."/>
            <person name="Wagner-McPherson C."/>
            <person name="Wollam A."/>
            <person name="Yoakum M."/>
            <person name="Bell M."/>
            <person name="Dedhia N."/>
            <person name="Parnell L."/>
            <person name="Shah R."/>
            <person name="Rodriguez M."/>
            <person name="Hoon See L."/>
            <person name="Vil D."/>
            <person name="Baker J."/>
            <person name="Kirchoff K."/>
            <person name="Toth K."/>
            <person name="King L."/>
            <person name="Bahret A."/>
            <person name="Miller B."/>
            <person name="Marra M.A."/>
            <person name="Martienssen R."/>
            <person name="McCombie W.R."/>
            <person name="Wilson R.K."/>
            <person name="Murphy G."/>
            <person name="Bancroft I."/>
            <person name="Volckaert G."/>
            <person name="Wambutt R."/>
            <person name="Duesterhoeft A."/>
            <person name="Stiekema W."/>
            <person name="Pohl T."/>
            <person name="Entian K.-D."/>
            <person name="Terryn N."/>
            <person name="Hartley N."/>
            <person name="Bent E."/>
            <person name="Johnson S."/>
            <person name="Langham S.-A."/>
            <person name="McCullagh B."/>
            <person name="Robben J."/>
            <person name="Grymonprez B."/>
            <person name="Zimmermann W."/>
            <person name="Ramsperger U."/>
            <person name="Wedler H."/>
            <person name="Balke K."/>
            <person name="Wedler E."/>
            <person name="Peters S."/>
            <person name="van Staveren M."/>
            <person name="Dirkse W."/>
            <person name="Mooijman P."/>
            <person name="Klein Lankhorst R."/>
            <person name="Weitzenegger T."/>
            <person name="Bothe G."/>
            <person name="Rose M."/>
            <person name="Hauf J."/>
            <person name="Berneiser S."/>
            <person name="Hempel S."/>
            <person name="Feldpausch M."/>
            <person name="Lamberth S."/>
            <person name="Villarroel R."/>
            <person name="Gielen J."/>
            <person name="Ardiles W."/>
            <person name="Bents O."/>
            <person name="Lemcke K."/>
            <person name="Kolesov G."/>
            <person name="Mayer K.F.X."/>
            <person name="Rudd S."/>
            <person name="Schoof H."/>
            <person name="Schueller C."/>
            <person name="Zaccaria P."/>
            <person name="Mewes H.-W."/>
            <person name="Bevan M."/>
            <person name="Fransz P.F."/>
        </authorList>
    </citation>
    <scope>NUCLEOTIDE SEQUENCE [LARGE SCALE GENOMIC DNA]</scope>
    <source>
        <strain>cv. Columbia</strain>
    </source>
</reference>
<reference key="4">
    <citation type="journal article" date="2017" name="Plant J.">
        <title>Araport11: a complete reannotation of the Arabidopsis thaliana reference genome.</title>
        <authorList>
            <person name="Cheng C.Y."/>
            <person name="Krishnakumar V."/>
            <person name="Chan A.P."/>
            <person name="Thibaud-Nissen F."/>
            <person name="Schobel S."/>
            <person name="Town C.D."/>
        </authorList>
    </citation>
    <scope>GENOME REANNOTATION</scope>
    <source>
        <strain>cv. Columbia</strain>
    </source>
</reference>
<reference key="5">
    <citation type="submission" date="2006-07" db="EMBL/GenBank/DDBJ databases">
        <title>Large-scale analysis of RIKEN Arabidopsis full-length (RAFL) cDNAs.</title>
        <authorList>
            <person name="Totoki Y."/>
            <person name="Seki M."/>
            <person name="Ishida J."/>
            <person name="Nakajima M."/>
            <person name="Enju A."/>
            <person name="Kamiya A."/>
            <person name="Narusaka M."/>
            <person name="Shin-i T."/>
            <person name="Nakagawa M."/>
            <person name="Sakamoto N."/>
            <person name="Oishi K."/>
            <person name="Kohara Y."/>
            <person name="Kobayashi M."/>
            <person name="Toyoda A."/>
            <person name="Sakaki Y."/>
            <person name="Sakurai T."/>
            <person name="Iida K."/>
            <person name="Akiyama K."/>
            <person name="Satou M."/>
            <person name="Toyoda T."/>
            <person name="Konagaya A."/>
            <person name="Carninci P."/>
            <person name="Kawai J."/>
            <person name="Hayashizaki Y."/>
            <person name="Shinozaki K."/>
        </authorList>
    </citation>
    <scope>NUCLEOTIDE SEQUENCE [LARGE SCALE MRNA] OF 1270-1531</scope>
    <source>
        <strain>cv. Columbia</strain>
    </source>
</reference>
<reference key="6">
    <citation type="journal article" date="2000" name="J. Cell Sci.">
        <title>A myosin family tree.</title>
        <authorList>
            <person name="Hodge T."/>
            <person name="Cope M.J."/>
        </authorList>
    </citation>
    <scope>GENE FAMILY</scope>
</reference>
<reference key="7">
    <citation type="journal article" date="2001" name="Genome Biol.">
        <title>Analysis of the myosins encoded in the recently completed Arabidopsis thaliana genome sequence.</title>
        <authorList>
            <person name="Reddy A.S."/>
            <person name="Day I.S."/>
        </authorList>
    </citation>
    <scope>GENE FAMILY</scope>
</reference>
<reference key="8">
    <citation type="journal article" date="2007" name="BMC Plant Biol.">
        <title>Association of six YFP-myosin XI-tail fusions with mobile plant cell organelles.</title>
        <authorList>
            <person name="Reisen D."/>
            <person name="Hanson M.R."/>
        </authorList>
    </citation>
    <scope>SUBCELLULAR LOCATION</scope>
</reference>
<reference key="9">
    <citation type="journal article" date="2007" name="J. Biol. Chem.">
        <title>Organelle targeting of myosin XI is mediated by two globular tail subdomains with separate cargo binding sites.</title>
        <authorList>
            <person name="Li J.F."/>
            <person name="Nebenfuehr A."/>
        </authorList>
    </citation>
    <scope>DOMAIN</scope>
    <scope>SUBCELLULAR LOCATION</scope>
</reference>
<reference key="10">
    <citation type="journal article" date="2007" name="Protoplasma">
        <title>Arabidopsis thaliana myosin XIK is involved in root hair as well as trichome morphogenesis on stems and leaves.</title>
        <authorList>
            <person name="Ojangu E.L."/>
            <person name="Jaerve K."/>
            <person name="Paves H."/>
            <person name="Truve E."/>
        </authorList>
    </citation>
    <scope>TISSUE SPECIFICITY</scope>
    <scope>DISRUPTION PHENOTYPE</scope>
    <scope>FUNCTION</scope>
</reference>
<reference key="11">
    <citation type="journal article" date="2008" name="J. Exp. Bot.">
        <title>Truncated myosin XI tail fusions inhibit peroxisome, Golgi, and mitochondrial movement in tobacco leaf epidermal cells: a genetic tool for the next generation.</title>
        <authorList>
            <person name="Sparkes I.A."/>
            <person name="Teanby N.A."/>
            <person name="Hawes C."/>
        </authorList>
    </citation>
    <scope>FUNCTION</scope>
    <scope>SUBCELLULAR LOCATION</scope>
</reference>
<reference key="12">
    <citation type="journal article" date="2008" name="Plant Physiol.">
        <title>Two class XI myosins function in organelle trafficking and root hair development in Arabidopsis.</title>
        <authorList>
            <person name="Peremyslov V.V."/>
            <person name="Prokhnevsky A.I."/>
            <person name="Avisar D."/>
            <person name="Dolja V.V."/>
        </authorList>
    </citation>
    <scope>DISRUPTION PHENOTYPE</scope>
    <scope>FUNCTION</scope>
</reference>
<reference key="13">
    <citation type="journal article" date="2008" name="Proc. Natl. Acad. Sci. U.S.A.">
        <title>Overlapping functions of the four class XI myosins in Arabidopsis growth, root hair elongation, and organelle motility.</title>
        <authorList>
            <person name="Prokhnevsky A.I."/>
            <person name="Peremyslov V.V."/>
            <person name="Dolja V.V."/>
        </authorList>
    </citation>
    <scope>DISRUPTION PHENOTYPE</scope>
    <scope>FUNCTION</scope>
</reference>
<reference key="14">
    <citation type="journal article" date="2009" name="J. Proteomics">
        <title>Phosphoproteomic analysis of nuclei-enriched fractions from Arabidopsis thaliana.</title>
        <authorList>
            <person name="Jones A.M.E."/>
            <person name="MacLean D."/>
            <person name="Studholme D.J."/>
            <person name="Serna-Sanz A."/>
            <person name="Andreasson E."/>
            <person name="Rathjen J.P."/>
            <person name="Peck S.C."/>
        </authorList>
    </citation>
    <scope>PHOSPHORYLATION [LARGE SCALE ANALYSIS] AT SER-1517</scope>
    <scope>IDENTIFICATION BY MASS SPECTROMETRY [LARGE SCALE ANALYSIS]</scope>
    <source>
        <strain>cv. Columbia</strain>
    </source>
</reference>
<reference key="15">
    <citation type="journal article" date="2009" name="Plant Physiol.">
        <title>A comparative study of the involvement of 17 Arabidopsis myosin family members on the motility of Golgi and other organelles.</title>
        <authorList>
            <person name="Avisar D."/>
            <person name="Abu-Abied M."/>
            <person name="Belausov E."/>
            <person name="Sadot E."/>
            <person name="Hawes C."/>
            <person name="Sparkes I.A."/>
        </authorList>
    </citation>
    <scope>FUNCTION</scope>
</reference>
<reference key="16">
    <citation type="journal article" date="2009" name="Plant Physiol.">
        <title>Large-scale Arabidopsis phosphoproteome profiling reveals novel chloroplast kinase substrates and phosphorylation networks.</title>
        <authorList>
            <person name="Reiland S."/>
            <person name="Messerli G."/>
            <person name="Baerenfaller K."/>
            <person name="Gerrits B."/>
            <person name="Endler A."/>
            <person name="Grossmann J."/>
            <person name="Gruissem W."/>
            <person name="Baginsky S."/>
        </authorList>
    </citation>
    <scope>PHOSPHORYLATION [LARGE SCALE ANALYSIS] AT SER-1517</scope>
    <scope>IDENTIFICATION BY MASS SPECTROMETRY [LARGE SCALE ANALYSIS]</scope>
</reference>
<reference key="17">
    <citation type="journal article" date="2010" name="Plant Cell">
        <title>Class XI myosins are required for development, cell expansion, and F-Actin organization in Arabidopsis.</title>
        <authorList>
            <person name="Peremyslov V.V."/>
            <person name="Prokhnevsky A.I."/>
            <person name="Dolja V.V."/>
        </authorList>
    </citation>
    <scope>FUNCTION</scope>
</reference>
<reference key="18">
    <citation type="journal article" date="2010" name="Proc. Natl. Acad. Sci. U.S.A.">
        <title>Myosin-dependent endoplasmic reticulum motility and F-actin organization in plant cells.</title>
        <authorList>
            <person name="Ueda H."/>
            <person name="Yokota E."/>
            <person name="Kutsuna N."/>
            <person name="Shimada T."/>
            <person name="Tamura K."/>
            <person name="Shimmen T."/>
            <person name="Hasezawa S."/>
            <person name="Dolja V.V."/>
            <person name="Hara-Nishimura I."/>
        </authorList>
    </citation>
    <scope>DISRUPTION PHENOTYPE</scope>
    <scope>FUNCTION</scope>
    <scope>SUBCELLULAR LOCATION</scope>
</reference>
<reference key="19">
    <citation type="journal article" date="2012" name="BMC Plant Biol.">
        <title>Myosins XI-K, XI-1, and XI-2 are required for development of pavement cells, trichomes, and stigmatic papillae in Arabidopsis.</title>
        <authorList>
            <person name="Ojangu E.L."/>
            <person name="Tanner K."/>
            <person name="Pata P."/>
            <person name="Jaerve K."/>
            <person name="Holweg C.L."/>
            <person name="Truve E."/>
            <person name="Paves H."/>
        </authorList>
    </citation>
    <scope>FUNCTION</scope>
</reference>
<reference key="20">
    <citation type="journal article" date="2012" name="Front. Plant Sci.">
        <title>Arabidopsis Myosin XI-K localizes to the motile endomembrane vesicles associated with F-actin.</title>
        <authorList>
            <person name="Peremyslov V.V."/>
            <person name="Klocko A.L."/>
            <person name="Fowler J.E."/>
            <person name="Dolja V.V."/>
        </authorList>
    </citation>
    <scope>SUBCELLULAR LOCATION</scope>
</reference>
<reference key="21">
    <citation type="journal article" date="2012" name="J. Exp. Bot.">
        <title>Myosin XIK is a major player in cytoplasm dynamics and is regulated by two amino acids in its tail.</title>
        <authorList>
            <person name="Avisar D."/>
            <person name="Abu-Abied M."/>
            <person name="Belausov E."/>
            <person name="Sadot E."/>
        </authorList>
    </citation>
    <scope>FUNCTION</scope>
</reference>
<reference key="22">
    <citation type="journal article" date="2013" name="Plant Cell">
        <title>Identification of myosin XI receptors in Arabidopsis defines a distinct class of transport vesicles.</title>
        <authorList>
            <person name="Peremyslov V.V."/>
            <person name="Morgun E.A."/>
            <person name="Kurth E.G."/>
            <person name="Makarova K.S."/>
            <person name="Koonin E.V."/>
            <person name="Dolja V.V."/>
        </authorList>
    </citation>
    <scope>INTERACTION WITH MYOB1; MYOB2 AND MYOB3</scope>
</reference>
<reference key="23">
    <citation type="journal article" date="2017" name="Proc. Natl. Acad. Sci. U.S.A.">
        <title>Myosin-driven transport network in plants.</title>
        <authorList>
            <person name="Kurth E.G."/>
            <person name="Peremyslov V.V."/>
            <person name="Turner H.L."/>
            <person name="Makarova K.S."/>
            <person name="Iranzo J."/>
            <person name="Mekhedov S.L."/>
            <person name="Koonin E.V."/>
            <person name="Dolja V.V."/>
        </authorList>
    </citation>
    <scope>INTERACTION WITH PHOX1 AND PHOX2</scope>
</reference>
<reference key="24">
    <citation type="journal article" date="2024" name="Quant. Plant Biol.">
        <title>Quantitative analysis of the root posture of Arabidopsis thaliana mutants with wavy roots.</title>
        <authorList>
            <person name="Yagi H."/>
            <person name="Hara-Nishimura I."/>
            <person name="Ueda H."/>
        </authorList>
    </citation>
    <scope>FUNCTION</scope>
    <scope>DISRUPTION PHENOTYPE</scope>
    <source>
        <strain>cv. Columbia</strain>
    </source>
</reference>
<protein>
    <recommendedName>
        <fullName>Myosin-17</fullName>
    </recommendedName>
    <alternativeName>
        <fullName evidence="24 25 26">Myosin XI K</fullName>
        <shortName evidence="24 25 26">AtXIK</shortName>
    </alternativeName>
</protein>
<keyword id="KW-0002">3D-structure</keyword>
<keyword id="KW-0009">Actin-binding</keyword>
<keyword id="KW-0025">Alternative splicing</keyword>
<keyword id="KW-0067">ATP-binding</keyword>
<keyword id="KW-0112">Calmodulin-binding</keyword>
<keyword id="KW-0175">Coiled coil</keyword>
<keyword id="KW-0963">Cytoplasm</keyword>
<keyword id="KW-0505">Motor protein</keyword>
<keyword id="KW-0518">Myosin</keyword>
<keyword id="KW-0547">Nucleotide-binding</keyword>
<keyword id="KW-0597">Phosphoprotein</keyword>
<keyword id="KW-1185">Reference proteome</keyword>
<keyword id="KW-0677">Repeat</keyword>
<gene>
    <name evidence="24 25 26" type="primary">XI-K</name>
    <name evidence="24 25 26" type="synonym">XIK</name>
    <name evidence="28" type="ordered locus">At5g20490</name>
    <name evidence="29" type="ORF">F7C8.80</name>
</gene>
<dbReference type="EMBL" id="AF296833">
    <property type="status" value="NOT_ANNOTATED_CDS"/>
    <property type="molecule type" value="Genomic_DNA"/>
</dbReference>
<dbReference type="EMBL" id="CP002688">
    <property type="protein sequence ID" value="AED92852.2"/>
    <property type="molecule type" value="Genomic_DNA"/>
</dbReference>
<dbReference type="EMBL" id="HQ427882">
    <property type="protein sequence ID" value="ADV74830.1"/>
    <property type="molecule type" value="mRNA"/>
</dbReference>
<dbReference type="EMBL" id="JN229265">
    <property type="protein sequence ID" value="AER51968.1"/>
    <property type="status" value="ALT_FRAME"/>
    <property type="molecule type" value="mRNA"/>
</dbReference>
<dbReference type="EMBL" id="AK228703">
    <property type="protein sequence ID" value="BAF00607.1"/>
    <property type="molecule type" value="mRNA"/>
</dbReference>
<dbReference type="RefSeq" id="NP_001318612.1">
    <molecule id="F4K5J1-1"/>
    <property type="nucleotide sequence ID" value="NM_001343671.1"/>
</dbReference>
<dbReference type="PDB" id="7KFL">
    <property type="method" value="X-ray"/>
    <property type="resolution" value="2.35 A"/>
    <property type="chains" value="A/B=1105-1499"/>
</dbReference>
<dbReference type="PDBsum" id="7KFL"/>
<dbReference type="SMR" id="F4K5J1"/>
<dbReference type="BioGRID" id="17447">
    <property type="interactions" value="7"/>
</dbReference>
<dbReference type="FunCoup" id="F4K5J1">
    <property type="interactions" value="1680"/>
</dbReference>
<dbReference type="IntAct" id="F4K5J1">
    <property type="interactions" value="2"/>
</dbReference>
<dbReference type="STRING" id="3702.F4K5J1"/>
<dbReference type="iPTMnet" id="F4K5J1"/>
<dbReference type="PaxDb" id="3702-AT5G20490.1"/>
<dbReference type="ProteomicsDB" id="251308">
    <molecule id="F4K5J1-1"/>
</dbReference>
<dbReference type="EnsemblPlants" id="AT5G20490.2">
    <molecule id="F4K5J1-1"/>
    <property type="protein sequence ID" value="AT5G20490.2"/>
    <property type="gene ID" value="AT5G20490"/>
</dbReference>
<dbReference type="GeneID" id="832171"/>
<dbReference type="Gramene" id="AT5G20490.2">
    <molecule id="F4K5J1-1"/>
    <property type="protein sequence ID" value="AT5G20490.2"/>
    <property type="gene ID" value="AT5G20490"/>
</dbReference>
<dbReference type="KEGG" id="ath:AT5G20490"/>
<dbReference type="Araport" id="AT5G20490"/>
<dbReference type="TAIR" id="AT5G20490">
    <property type="gene designation" value="XIK"/>
</dbReference>
<dbReference type="eggNOG" id="KOG0160">
    <property type="taxonomic scope" value="Eukaryota"/>
</dbReference>
<dbReference type="InParanoid" id="F4K5J1"/>
<dbReference type="OMA" id="IASRCTF"/>
<dbReference type="PRO" id="PR:F4K5J1"/>
<dbReference type="Proteomes" id="UP000006548">
    <property type="component" value="Chromosome 5"/>
</dbReference>
<dbReference type="ExpressionAtlas" id="F4K5J1">
    <property type="expression patterns" value="baseline and differential"/>
</dbReference>
<dbReference type="GO" id="GO:0016459">
    <property type="term" value="C:myosin complex"/>
    <property type="evidence" value="ECO:0007669"/>
    <property type="project" value="UniProtKB-KW"/>
</dbReference>
<dbReference type="GO" id="GO:0009506">
    <property type="term" value="C:plasmodesma"/>
    <property type="evidence" value="ECO:0007005"/>
    <property type="project" value="TAIR"/>
</dbReference>
<dbReference type="GO" id="GO:0035619">
    <property type="term" value="C:root hair tip"/>
    <property type="evidence" value="ECO:0000314"/>
    <property type="project" value="TAIR"/>
</dbReference>
<dbReference type="GO" id="GO:0030133">
    <property type="term" value="C:transport vesicle"/>
    <property type="evidence" value="ECO:0000314"/>
    <property type="project" value="UniProtKB"/>
</dbReference>
<dbReference type="GO" id="GO:0003779">
    <property type="term" value="F:actin binding"/>
    <property type="evidence" value="ECO:0007669"/>
    <property type="project" value="UniProtKB-KW"/>
</dbReference>
<dbReference type="GO" id="GO:0005524">
    <property type="term" value="F:ATP binding"/>
    <property type="evidence" value="ECO:0007669"/>
    <property type="project" value="UniProtKB-KW"/>
</dbReference>
<dbReference type="GO" id="GO:0005516">
    <property type="term" value="F:calmodulin binding"/>
    <property type="evidence" value="ECO:0007669"/>
    <property type="project" value="UniProtKB-KW"/>
</dbReference>
<dbReference type="GO" id="GO:0003774">
    <property type="term" value="F:cytoskeletal motor activity"/>
    <property type="evidence" value="ECO:0000250"/>
    <property type="project" value="TAIR"/>
</dbReference>
<dbReference type="GO" id="GO:0007015">
    <property type="term" value="P:actin filament organization"/>
    <property type="evidence" value="ECO:0007669"/>
    <property type="project" value="InterPro"/>
</dbReference>
<dbReference type="GO" id="GO:0030048">
    <property type="term" value="P:actin filament-based movement"/>
    <property type="evidence" value="ECO:0000304"/>
    <property type="project" value="TAIR"/>
</dbReference>
<dbReference type="GO" id="GO:0051301">
    <property type="term" value="P:cell division"/>
    <property type="evidence" value="ECO:0000316"/>
    <property type="project" value="TAIR"/>
</dbReference>
<dbReference type="GO" id="GO:0010154">
    <property type="term" value="P:fruit development"/>
    <property type="evidence" value="ECO:0000316"/>
    <property type="project" value="TAIR"/>
</dbReference>
<dbReference type="GO" id="GO:0051645">
    <property type="term" value="P:Golgi localization"/>
    <property type="evidence" value="ECO:0000315"/>
    <property type="project" value="TAIR"/>
</dbReference>
<dbReference type="GO" id="GO:0048467">
    <property type="term" value="P:gynoecium development"/>
    <property type="evidence" value="ECO:0000316"/>
    <property type="project" value="TAIR"/>
</dbReference>
<dbReference type="GO" id="GO:0090436">
    <property type="term" value="P:leaf pavement cell development"/>
    <property type="evidence" value="ECO:0000316"/>
    <property type="project" value="TAIR"/>
</dbReference>
<dbReference type="GO" id="GO:0051646">
    <property type="term" value="P:mitochondrion localization"/>
    <property type="evidence" value="ECO:0000315"/>
    <property type="project" value="TAIR"/>
</dbReference>
<dbReference type="GO" id="GO:0060151">
    <property type="term" value="P:peroxisome localization"/>
    <property type="evidence" value="ECO:0000315"/>
    <property type="project" value="TAIR"/>
</dbReference>
<dbReference type="GO" id="GO:0009791">
    <property type="term" value="P:post-embryonic development"/>
    <property type="evidence" value="ECO:0000316"/>
    <property type="project" value="TAIR"/>
</dbReference>
<dbReference type="GO" id="GO:0048768">
    <property type="term" value="P:root hair cell tip growth"/>
    <property type="evidence" value="ECO:0000315"/>
    <property type="project" value="TAIR"/>
</dbReference>
<dbReference type="GO" id="GO:0048767">
    <property type="term" value="P:root hair elongation"/>
    <property type="evidence" value="ECO:0000315"/>
    <property type="project" value="TAIR"/>
</dbReference>
<dbReference type="GO" id="GO:0010091">
    <property type="term" value="P:trichome branching"/>
    <property type="evidence" value="ECO:0000315"/>
    <property type="project" value="TAIR"/>
</dbReference>
<dbReference type="GO" id="GO:0010090">
    <property type="term" value="P:trichome morphogenesis"/>
    <property type="evidence" value="ECO:0000315"/>
    <property type="project" value="TAIR"/>
</dbReference>
<dbReference type="GO" id="GO:0009826">
    <property type="term" value="P:unidimensional cell growth"/>
    <property type="evidence" value="ECO:0000316"/>
    <property type="project" value="TAIR"/>
</dbReference>
<dbReference type="CDD" id="cd15475">
    <property type="entry name" value="MyosinXI_CBD"/>
    <property type="match status" value="1"/>
</dbReference>
<dbReference type="CDD" id="cd01384">
    <property type="entry name" value="MYSc_Myo11"/>
    <property type="match status" value="1"/>
</dbReference>
<dbReference type="FunFam" id="1.20.58.530:FF:000002">
    <property type="entry name" value="Class V myosin"/>
    <property type="match status" value="1"/>
</dbReference>
<dbReference type="FunFam" id="1.20.120.720:FF:000011">
    <property type="entry name" value="Myosin 2"/>
    <property type="match status" value="1"/>
</dbReference>
<dbReference type="FunFam" id="1.10.10.820:FF:000001">
    <property type="entry name" value="Myosin heavy chain"/>
    <property type="match status" value="1"/>
</dbReference>
<dbReference type="FunFam" id="3.30.70.1590:FF:000006">
    <property type="entry name" value="Myosin XI D"/>
    <property type="match status" value="1"/>
</dbReference>
<dbReference type="FunFam" id="1.20.5.190:FF:000001">
    <property type="entry name" value="unconventional myosin-Va"/>
    <property type="match status" value="3"/>
</dbReference>
<dbReference type="Gene3D" id="1.10.10.820">
    <property type="match status" value="1"/>
</dbReference>
<dbReference type="Gene3D" id="1.20.5.190">
    <property type="match status" value="3"/>
</dbReference>
<dbReference type="Gene3D" id="1.20.58.530">
    <property type="match status" value="1"/>
</dbReference>
<dbReference type="Gene3D" id="3.30.70.1590">
    <property type="match status" value="1"/>
</dbReference>
<dbReference type="Gene3D" id="3.40.850.10">
    <property type="entry name" value="Kinesin motor domain"/>
    <property type="match status" value="1"/>
</dbReference>
<dbReference type="Gene3D" id="1.20.120.720">
    <property type="entry name" value="Myosin VI head, motor domain, U50 subdomain"/>
    <property type="match status" value="1"/>
</dbReference>
<dbReference type="InterPro" id="IPR002710">
    <property type="entry name" value="Dilute_dom"/>
</dbReference>
<dbReference type="InterPro" id="IPR000048">
    <property type="entry name" value="IQ_motif_EF-hand-BS"/>
</dbReference>
<dbReference type="InterPro" id="IPR036961">
    <property type="entry name" value="Kinesin_motor_dom_sf"/>
</dbReference>
<dbReference type="InterPro" id="IPR001609">
    <property type="entry name" value="Myosin_head_motor_dom-like"/>
</dbReference>
<dbReference type="InterPro" id="IPR004009">
    <property type="entry name" value="Myosin_N"/>
</dbReference>
<dbReference type="InterPro" id="IPR037975">
    <property type="entry name" value="MyosinXI_CBD"/>
</dbReference>
<dbReference type="InterPro" id="IPR036018">
    <property type="entry name" value="MYSc_Myo11"/>
</dbReference>
<dbReference type="InterPro" id="IPR027417">
    <property type="entry name" value="P-loop_NTPase"/>
</dbReference>
<dbReference type="PANTHER" id="PTHR13140">
    <property type="entry name" value="MYOSIN"/>
    <property type="match status" value="1"/>
</dbReference>
<dbReference type="PANTHER" id="PTHR13140:SF772">
    <property type="entry name" value="MYOSIN-17"/>
    <property type="match status" value="1"/>
</dbReference>
<dbReference type="Pfam" id="PF01843">
    <property type="entry name" value="DIL"/>
    <property type="match status" value="1"/>
</dbReference>
<dbReference type="Pfam" id="PF00612">
    <property type="entry name" value="IQ"/>
    <property type="match status" value="4"/>
</dbReference>
<dbReference type="Pfam" id="PF00063">
    <property type="entry name" value="Myosin_head"/>
    <property type="match status" value="1"/>
</dbReference>
<dbReference type="Pfam" id="PF02736">
    <property type="entry name" value="Myosin_N"/>
    <property type="match status" value="1"/>
</dbReference>
<dbReference type="PRINTS" id="PR00193">
    <property type="entry name" value="MYOSINHEAVY"/>
</dbReference>
<dbReference type="SMART" id="SM01132">
    <property type="entry name" value="DIL"/>
    <property type="match status" value="1"/>
</dbReference>
<dbReference type="SMART" id="SM00015">
    <property type="entry name" value="IQ"/>
    <property type="match status" value="5"/>
</dbReference>
<dbReference type="SMART" id="SM00242">
    <property type="entry name" value="MYSc"/>
    <property type="match status" value="1"/>
</dbReference>
<dbReference type="SUPFAM" id="SSF52540">
    <property type="entry name" value="P-loop containing nucleoside triphosphate hydrolases"/>
    <property type="match status" value="2"/>
</dbReference>
<dbReference type="PROSITE" id="PS51126">
    <property type="entry name" value="DILUTE"/>
    <property type="match status" value="1"/>
</dbReference>
<dbReference type="PROSITE" id="PS50096">
    <property type="entry name" value="IQ"/>
    <property type="match status" value="5"/>
</dbReference>
<dbReference type="PROSITE" id="PS51456">
    <property type="entry name" value="MYOSIN_MOTOR"/>
    <property type="match status" value="1"/>
</dbReference>
<dbReference type="PROSITE" id="PS51844">
    <property type="entry name" value="SH3_LIKE"/>
    <property type="match status" value="1"/>
</dbReference>
<feature type="chain" id="PRO_0000422872" description="Myosin-17">
    <location>
        <begin position="1"/>
        <end position="1531"/>
    </location>
</feature>
<feature type="domain" description="Myosin N-terminal SH3-like" evidence="7">
    <location>
        <begin position="8"/>
        <end position="57"/>
    </location>
</feature>
<feature type="domain" description="Myosin motor" evidence="6">
    <location>
        <begin position="62"/>
        <end position="732"/>
    </location>
</feature>
<feature type="domain" description="IQ 1" evidence="4">
    <location>
        <begin position="758"/>
        <end position="787"/>
    </location>
</feature>
<feature type="domain" description="IQ 2" evidence="4">
    <location>
        <begin position="783"/>
        <end position="812"/>
    </location>
</feature>
<feature type="domain" description="IQ 3" evidence="4">
    <location>
        <begin position="806"/>
        <end position="835"/>
    </location>
</feature>
<feature type="domain" description="IQ 4" evidence="4">
    <location>
        <begin position="831"/>
        <end position="860"/>
    </location>
</feature>
<feature type="domain" description="IQ 5" evidence="4">
    <location>
        <begin position="854"/>
        <end position="883"/>
    </location>
</feature>
<feature type="domain" description="Dilute" evidence="5">
    <location>
        <begin position="1159"/>
        <end position="1470"/>
    </location>
</feature>
<feature type="region of interest" description="Actin-binding" evidence="3">
    <location>
        <begin position="495"/>
        <end position="529"/>
    </location>
</feature>
<feature type="region of interest" description="Actin-binding" evidence="3">
    <location>
        <begin position="531"/>
        <end position="554"/>
    </location>
</feature>
<feature type="region of interest" description="Actin-binding" evidence="3">
    <location>
        <begin position="589"/>
        <end position="613"/>
    </location>
</feature>
<feature type="region of interest" description="Actin-binding" evidence="1">
    <location>
        <begin position="613"/>
        <end position="635"/>
    </location>
</feature>
<feature type="region of interest" description="Disordered" evidence="8">
    <location>
        <begin position="1071"/>
        <end position="1090"/>
    </location>
</feature>
<feature type="coiled-coil region" evidence="3">
    <location>
        <begin position="884"/>
        <end position="1056"/>
    </location>
</feature>
<feature type="compositionally biased region" description="Polar residues" evidence="8">
    <location>
        <begin position="1076"/>
        <end position="1090"/>
    </location>
</feature>
<feature type="binding site" evidence="3">
    <location>
        <begin position="156"/>
        <end position="163"/>
    </location>
    <ligand>
        <name>ATP</name>
        <dbReference type="ChEBI" id="CHEBI:30616"/>
    </ligand>
</feature>
<feature type="binding site" evidence="3">
    <location>
        <begin position="209"/>
        <end position="217"/>
    </location>
    <ligand>
        <name>ATP</name>
        <dbReference type="ChEBI" id="CHEBI:30616"/>
    </ligand>
</feature>
<feature type="modified residue" description="Phosphoserine" evidence="30 31">
    <location>
        <position position="1517"/>
    </location>
</feature>
<feature type="sequence conflict" description="In Ref. 2; AER51968." evidence="27" ref="2">
    <original>F</original>
    <variation>V</variation>
    <location>
        <position position="409"/>
    </location>
</feature>
<feature type="helix" evidence="32">
    <location>
        <begin position="1108"/>
        <end position="1124"/>
    </location>
</feature>
<feature type="helix" evidence="32">
    <location>
        <begin position="1135"/>
        <end position="1146"/>
    </location>
</feature>
<feature type="turn" evidence="32">
    <location>
        <begin position="1147"/>
        <end position="1150"/>
    </location>
</feature>
<feature type="helix" evidence="32">
    <location>
        <begin position="1157"/>
        <end position="1169"/>
    </location>
</feature>
<feature type="strand" evidence="32">
    <location>
        <begin position="1170"/>
        <end position="1173"/>
    </location>
</feature>
<feature type="helix" evidence="32">
    <location>
        <begin position="1175"/>
        <end position="1193"/>
    </location>
</feature>
<feature type="helix" evidence="32">
    <location>
        <begin position="1236"/>
        <end position="1238"/>
    </location>
</feature>
<feature type="helix" evidence="32">
    <location>
        <begin position="1254"/>
        <end position="1290"/>
    </location>
</feature>
<feature type="helix" evidence="32">
    <location>
        <begin position="1292"/>
        <end position="1295"/>
    </location>
</feature>
<feature type="helix" evidence="32">
    <location>
        <begin position="1309"/>
        <end position="1335"/>
    </location>
</feature>
<feature type="helix" evidence="32">
    <location>
        <begin position="1340"/>
        <end position="1364"/>
    </location>
</feature>
<feature type="helix" evidence="32">
    <location>
        <begin position="1366"/>
        <end position="1368"/>
    </location>
</feature>
<feature type="helix" evidence="32">
    <location>
        <begin position="1371"/>
        <end position="1391"/>
    </location>
</feature>
<feature type="helix" evidence="32">
    <location>
        <begin position="1393"/>
        <end position="1396"/>
    </location>
</feature>
<feature type="turn" evidence="32">
    <location>
        <begin position="1397"/>
        <end position="1399"/>
    </location>
</feature>
<feature type="helix" evidence="32">
    <location>
        <begin position="1400"/>
        <end position="1403"/>
    </location>
</feature>
<feature type="helix" evidence="32">
    <location>
        <begin position="1404"/>
        <end position="1413"/>
    </location>
</feature>
<feature type="helix" evidence="32">
    <location>
        <begin position="1423"/>
        <end position="1428"/>
    </location>
</feature>
<feature type="helix" evidence="32">
    <location>
        <begin position="1436"/>
        <end position="1445"/>
    </location>
</feature>
<feature type="strand" evidence="32">
    <location>
        <begin position="1449"/>
        <end position="1451"/>
    </location>
</feature>
<feature type="helix" evidence="32">
    <location>
        <begin position="1458"/>
        <end position="1473"/>
    </location>
</feature>
<feature type="helix" evidence="32">
    <location>
        <begin position="1492"/>
        <end position="1497"/>
    </location>
</feature>
<organism>
    <name type="scientific">Arabidopsis thaliana</name>
    <name type="common">Mouse-ear cress</name>
    <dbReference type="NCBI Taxonomy" id="3702"/>
    <lineage>
        <taxon>Eukaryota</taxon>
        <taxon>Viridiplantae</taxon>
        <taxon>Streptophyta</taxon>
        <taxon>Embryophyta</taxon>
        <taxon>Tracheophyta</taxon>
        <taxon>Spermatophyta</taxon>
        <taxon>Magnoliopsida</taxon>
        <taxon>eudicotyledons</taxon>
        <taxon>Gunneridae</taxon>
        <taxon>Pentapetalae</taxon>
        <taxon>rosids</taxon>
        <taxon>malvids</taxon>
        <taxon>Brassicales</taxon>
        <taxon>Brassicaceae</taxon>
        <taxon>Camelineae</taxon>
        <taxon>Arabidopsis</taxon>
    </lineage>
</organism>
<evidence type="ECO:0000250" key="1"/>
<evidence type="ECO:0000250" key="2">
    <source>
        <dbReference type="UniProtKB" id="Q39160"/>
    </source>
</evidence>
<evidence type="ECO:0000255" key="3"/>
<evidence type="ECO:0000255" key="4">
    <source>
        <dbReference type="PROSITE-ProRule" id="PRU00116"/>
    </source>
</evidence>
<evidence type="ECO:0000255" key="5">
    <source>
        <dbReference type="PROSITE-ProRule" id="PRU00503"/>
    </source>
</evidence>
<evidence type="ECO:0000255" key="6">
    <source>
        <dbReference type="PROSITE-ProRule" id="PRU00782"/>
    </source>
</evidence>
<evidence type="ECO:0000255" key="7">
    <source>
        <dbReference type="PROSITE-ProRule" id="PRU01190"/>
    </source>
</evidence>
<evidence type="ECO:0000256" key="8">
    <source>
        <dbReference type="SAM" id="MobiDB-lite"/>
    </source>
</evidence>
<evidence type="ECO:0000269" key="9">
    <source>
    </source>
</evidence>
<evidence type="ECO:0000269" key="10">
    <source>
    </source>
</evidence>
<evidence type="ECO:0000269" key="11">
    <source>
    </source>
</evidence>
<evidence type="ECO:0000269" key="12">
    <source>
    </source>
</evidence>
<evidence type="ECO:0000269" key="13">
    <source>
    </source>
</evidence>
<evidence type="ECO:0000269" key="14">
    <source>
    </source>
</evidence>
<evidence type="ECO:0000269" key="15">
    <source>
    </source>
</evidence>
<evidence type="ECO:0000269" key="16">
    <source>
    </source>
</evidence>
<evidence type="ECO:0000269" key="17">
    <source>
    </source>
</evidence>
<evidence type="ECO:0000269" key="18">
    <source>
    </source>
</evidence>
<evidence type="ECO:0000269" key="19">
    <source>
    </source>
</evidence>
<evidence type="ECO:0000269" key="20">
    <source>
    </source>
</evidence>
<evidence type="ECO:0000269" key="21">
    <source>
    </source>
</evidence>
<evidence type="ECO:0000269" key="22">
    <source>
    </source>
</evidence>
<evidence type="ECO:0000269" key="23">
    <source>
    </source>
</evidence>
<evidence type="ECO:0000303" key="24">
    <source>
    </source>
</evidence>
<evidence type="ECO:0000303" key="25">
    <source>
    </source>
</evidence>
<evidence type="ECO:0000303" key="26">
    <source ref="2"/>
</evidence>
<evidence type="ECO:0000305" key="27"/>
<evidence type="ECO:0000312" key="28">
    <source>
        <dbReference type="Araport" id="AT5G20490"/>
    </source>
</evidence>
<evidence type="ECO:0000312" key="29">
    <source>
        <dbReference type="EMBL" id="AF296833"/>
    </source>
</evidence>
<evidence type="ECO:0007744" key="30">
    <source>
    </source>
</evidence>
<evidence type="ECO:0007744" key="31">
    <source>
    </source>
</evidence>
<evidence type="ECO:0007829" key="32">
    <source>
        <dbReference type="PDB" id="7KFL"/>
    </source>
</evidence>
<comment type="function">
    <text evidence="10 12 13 14 15 16 17 18 19 23">Myosin heavy chain that is required for the cell cycle-regulated transport of various organelles and proteins for their segregation. Functions by binding with its tail domain to receptor proteins on organelles and exerting force with its N-terminal motor domain against actin filaments, thereby transporting its cargo along polarized actin cables. Involved in the tip growth of root hair cells and in the elongation of trichome stalk and branches. Plays a major role in trafficking of Golgi stacks, mitochondria and peroxisomes during root hair development. Acts as the primary contributor to ER streaming with a major role in the movement of Golgi bodies. Required for development of pavement cells, trichomes, and stigmatic papillae. Together with XI-F, required for the regulation of organ bending, such as gravitropic root bending (PubMed:39777035).</text>
</comment>
<comment type="subunit">
    <text evidence="2 21 22">Homodimer (By similarity). Interacts with MYOB1, MYOB2 and MYOB3 (PubMed:23995081). Interacts with PHOX1 and PHOX2 (PubMed:28096376).</text>
</comment>
<comment type="subcellular location">
    <subcellularLocation>
        <location evidence="9 11 13 16 20">Cytoplasm</location>
    </subcellularLocation>
    <text>Colocalizes with peroxisome, cytoplasmic vesicles, endomembrane vesicles, endoplasmic reticulum and/or organelles.</text>
</comment>
<comment type="alternative products">
    <event type="alternative splicing"/>
    <isoform>
        <id>F4K5J1-1</id>
        <name>1</name>
        <sequence type="displayed"/>
    </isoform>
    <text>A number of isoforms are produced. According to EST sequences.</text>
</comment>
<comment type="tissue specificity">
    <text evidence="10">Expressed ubiquitously.</text>
</comment>
<comment type="domain">
    <text evidence="1">IQ domain mediates interaction with calmodulin.</text>
</comment>
<comment type="domain">
    <text evidence="1">The tail domain is a globular cargo-binding domain.</text>
</comment>
<comment type="disruption phenotype">
    <text evidence="10 12 14 16 23">Impaired growth of root hair cells, twisted shape of stem trichomes, and irregular size, branch positioning, and branch expansion of leaf trichomes (PubMed:17458634, PubMed:18178669, PubMed:19060218, PubMed:20351265). Affected organization of the ER network and orientation of the actin filament bundles (PubMed:17458634, PubMed:18178669, PubMed:19060218, PubMed:20351265). The double mutant xif xik exhibits aberrantly enhanced organ bending, including increased gravitropic root bending XI-F (PubMed:39777035). The xif xik abcb19 triple mutant has a stronger bending phenotype than the double mutant xif xik (PubMed:39777035).</text>
</comment>
<comment type="similarity">
    <text evidence="27">Belongs to the TRAFAC class myosin-kinesin ATPase superfamily. Myosin family. Plant myosin class XI subfamily.</text>
</comment>
<comment type="sequence caution" evidence="27">
    <conflict type="frameshift">
        <sequence resource="EMBL-CDS" id="AER51968"/>
    </conflict>
</comment>
<sequence length="1531" mass="173377">MVGPVNIIVGSHVWIEDPGAAWIDGEVVKINGEEVHAHTTNGKTVVANIANVFPKDTEAPPGGVDDMTKLSYLHEPGVLNNLAMRYELNEIYTYTGNILIAVNPFQRLPHLYDTHMMEQYKGAGFGELSPHVFAIAEVAYRAMINEGKSNSILVSGESGAGKTETTKMLMRYLAYLGGRSGVEGRTVEQQVLESNPVLEAFGNAKTLRNNNSSRFGKFVELQFDNCGRISGAAVRTYLLERSRVCQISDPERNYHCFYLLCAAPPEEREKFKLGDPKLFHYLNQSKCYKLDGVDDTEEYLATRRAMDIVGISEEEQDAIFRVVAAILHLGNVNFAKGKEIDSSVLKDEKSRYHLDVCAELLRCDAKKMEDALIKRVMVTPEEVITRTLDPDSATGSRDALAKTIYSRLFDWLVDKINNSIGQDPNSKTIIGVLDIYGFESFKINSFEQFCINFTNEKLQQHFNQHVFKMEQEDYTKEEINWSYIEFVDNKDVLELIEKKPGGVIALLDEACMFPKSTHETFAQKLYQTFKNYKRFTKPKLSRTSFAISHYAGEVTYQADLFLDKNKDYVVAEHQDLLIASSDTFVAGLFPRLPEETSSKTKFSSIGSRFKLQLQSLMETLSSTEPHYIRCVKPNNVLKPAIFENVNVIQQLRCGGVLEAIRISCAGYPTKRTFYEFLNRFGVLAPEVLEGNYDDKVACKMLLDKIGLKGYELGKTKVFLRAGQMAELDARRAEVLGNAARRIQRQSRTFIACKEFRALRGAAIVLQSNCRGKLACNLYEEMRRQAAAVKIQKIFRRHIARESYLRIRHSTITVQTALRGMVARNEFRFRKQMKAATIIQARLRSHLTHSYYKQLQKAALSTQCGWRSRVARKELRTLKMAARDTGALREAKDKLEKRVEELTWRLQLEKRQRTELEEAKTQEYAKQQEALETMRLQVEEANAAVIREREAARKAIEEAPPVIKETPVLVEDTEKINSLTSEVEALKASLQAERQAAENLRKAFSEAEARNSELATELENATRKADQLHESVQRLEEKLSNSESEIQVLRQQALAISPTSRTMATRSKTMLLPRTPENGNYLNGGTKTTPDMTLAVREPESEEKPQKHLNEKQQENQDLLVKCISQNLGYNGDKPVAACVIYKCLLHWRSFEVERTSVFDRIIQTIATAIEVPDNNEVLAYWLSNSATLLLLLQRTLKATGAASLTPQRRRTTSASLFGRMSQGLRGSPQSAGLSFLNRQGLTKLDDLRQVEAKYPALLFKQQLTAFLEKIYGMIRDNLKKEISPLLGLCIQAPRTSRASLVKGRAQANAVAQQALIAHWQSIRKSLNSYLNLMKANNAPPFLVRKVFTQIFSFINVQLFNSLLLRRECCSFSNGEYVKAGLAELEQWCIEATDEYAGSAWDELRHIRQAVGFLVIHQKPKKTLDEITRELCPVLSIQQLYRISTMYWDDKYGTHSVSSDVIANMRVMMTEDSNNAVSSSFLLDDDSSIPFTVEDISKSMQQVDVNDIEPPQLIRENSGFGFLLTRKEGSTS</sequence>